<evidence type="ECO:0000255" key="1">
    <source>
        <dbReference type="HAMAP-Rule" id="MF_00173"/>
    </source>
</evidence>
<keyword id="KW-0028">Amino-acid biosynthesis</keyword>
<keyword id="KW-0055">Arginine biosynthesis</keyword>
<keyword id="KW-0963">Cytoplasm</keyword>
<keyword id="KW-0238">DNA-binding</keyword>
<keyword id="KW-1185">Reference proteome</keyword>
<keyword id="KW-0678">Repressor</keyword>
<keyword id="KW-0804">Transcription</keyword>
<keyword id="KW-0805">Transcription regulation</keyword>
<protein>
    <recommendedName>
        <fullName evidence="1">Arginine repressor</fullName>
    </recommendedName>
</protein>
<gene>
    <name evidence="1" type="primary">argR</name>
    <name type="ordered locus">Ctha_2281</name>
</gene>
<dbReference type="EMBL" id="CP001100">
    <property type="protein sequence ID" value="ACF14732.1"/>
    <property type="molecule type" value="Genomic_DNA"/>
</dbReference>
<dbReference type="RefSeq" id="WP_012500815.1">
    <property type="nucleotide sequence ID" value="NC_011026.1"/>
</dbReference>
<dbReference type="SMR" id="B3QWH2"/>
<dbReference type="STRING" id="517418.Ctha_2281"/>
<dbReference type="KEGG" id="cts:Ctha_2281"/>
<dbReference type="eggNOG" id="COG1438">
    <property type="taxonomic scope" value="Bacteria"/>
</dbReference>
<dbReference type="HOGENOM" id="CLU_097103_3_0_10"/>
<dbReference type="OrthoDB" id="9807089at2"/>
<dbReference type="UniPathway" id="UPA00068"/>
<dbReference type="Proteomes" id="UP000001208">
    <property type="component" value="Chromosome"/>
</dbReference>
<dbReference type="GO" id="GO:0005737">
    <property type="term" value="C:cytoplasm"/>
    <property type="evidence" value="ECO:0007669"/>
    <property type="project" value="UniProtKB-SubCell"/>
</dbReference>
<dbReference type="GO" id="GO:0034618">
    <property type="term" value="F:arginine binding"/>
    <property type="evidence" value="ECO:0007669"/>
    <property type="project" value="InterPro"/>
</dbReference>
<dbReference type="GO" id="GO:0003677">
    <property type="term" value="F:DNA binding"/>
    <property type="evidence" value="ECO:0007669"/>
    <property type="project" value="UniProtKB-KW"/>
</dbReference>
<dbReference type="GO" id="GO:0003700">
    <property type="term" value="F:DNA-binding transcription factor activity"/>
    <property type="evidence" value="ECO:0007669"/>
    <property type="project" value="UniProtKB-UniRule"/>
</dbReference>
<dbReference type="GO" id="GO:0006526">
    <property type="term" value="P:L-arginine biosynthetic process"/>
    <property type="evidence" value="ECO:0007669"/>
    <property type="project" value="UniProtKB-UniPathway"/>
</dbReference>
<dbReference type="GO" id="GO:0051259">
    <property type="term" value="P:protein complex oligomerization"/>
    <property type="evidence" value="ECO:0007669"/>
    <property type="project" value="InterPro"/>
</dbReference>
<dbReference type="GO" id="GO:1900079">
    <property type="term" value="P:regulation of arginine biosynthetic process"/>
    <property type="evidence" value="ECO:0007669"/>
    <property type="project" value="UniProtKB-UniRule"/>
</dbReference>
<dbReference type="Gene3D" id="3.30.1360.40">
    <property type="match status" value="1"/>
</dbReference>
<dbReference type="Gene3D" id="1.10.10.10">
    <property type="entry name" value="Winged helix-like DNA-binding domain superfamily/Winged helix DNA-binding domain"/>
    <property type="match status" value="1"/>
</dbReference>
<dbReference type="HAMAP" id="MF_00173">
    <property type="entry name" value="Arg_repressor"/>
    <property type="match status" value="1"/>
</dbReference>
<dbReference type="InterPro" id="IPR001669">
    <property type="entry name" value="Arg_repress"/>
</dbReference>
<dbReference type="InterPro" id="IPR020899">
    <property type="entry name" value="Arg_repress_C"/>
</dbReference>
<dbReference type="InterPro" id="IPR036251">
    <property type="entry name" value="Arg_repress_C_sf"/>
</dbReference>
<dbReference type="InterPro" id="IPR020900">
    <property type="entry name" value="Arg_repress_DNA-bd"/>
</dbReference>
<dbReference type="InterPro" id="IPR036388">
    <property type="entry name" value="WH-like_DNA-bd_sf"/>
</dbReference>
<dbReference type="InterPro" id="IPR036390">
    <property type="entry name" value="WH_DNA-bd_sf"/>
</dbReference>
<dbReference type="PANTHER" id="PTHR34471">
    <property type="entry name" value="ARGININE REPRESSOR"/>
    <property type="match status" value="1"/>
</dbReference>
<dbReference type="PANTHER" id="PTHR34471:SF1">
    <property type="entry name" value="ARGININE REPRESSOR"/>
    <property type="match status" value="1"/>
</dbReference>
<dbReference type="Pfam" id="PF01316">
    <property type="entry name" value="Arg_repressor"/>
    <property type="match status" value="1"/>
</dbReference>
<dbReference type="Pfam" id="PF02863">
    <property type="entry name" value="Arg_repressor_C"/>
    <property type="match status" value="1"/>
</dbReference>
<dbReference type="PRINTS" id="PR01467">
    <property type="entry name" value="ARGREPRESSOR"/>
</dbReference>
<dbReference type="SUPFAM" id="SSF55252">
    <property type="entry name" value="C-terminal domain of arginine repressor"/>
    <property type="match status" value="1"/>
</dbReference>
<dbReference type="SUPFAM" id="SSF46785">
    <property type="entry name" value="Winged helix' DNA-binding domain"/>
    <property type="match status" value="1"/>
</dbReference>
<sequence length="148" mass="16245">MTKQERQLKIKELISGQTVSSQYELLSELKSVGIEITQATLSRDCAELGIVRMYSGDSYKLSIPASGEKNVIKNLIGVEILSIQANEIFVIIKTLPGRASGVASFIDSFENPMIIGTLAGDDTVMVIPKTIKETKKVHQFIRNSISDN</sequence>
<reference key="1">
    <citation type="submission" date="2008-06" db="EMBL/GenBank/DDBJ databases">
        <title>Complete sequence of Chloroherpeton thalassium ATCC 35110.</title>
        <authorList>
            <consortium name="US DOE Joint Genome Institute"/>
            <person name="Lucas S."/>
            <person name="Copeland A."/>
            <person name="Lapidus A."/>
            <person name="Glavina del Rio T."/>
            <person name="Dalin E."/>
            <person name="Tice H."/>
            <person name="Bruce D."/>
            <person name="Goodwin L."/>
            <person name="Pitluck S."/>
            <person name="Schmutz J."/>
            <person name="Larimer F."/>
            <person name="Land M."/>
            <person name="Hauser L."/>
            <person name="Kyrpides N."/>
            <person name="Mikhailova N."/>
            <person name="Liu Z."/>
            <person name="Li T."/>
            <person name="Zhao F."/>
            <person name="Overmann J."/>
            <person name="Bryant D.A."/>
            <person name="Richardson P."/>
        </authorList>
    </citation>
    <scope>NUCLEOTIDE SEQUENCE [LARGE SCALE GENOMIC DNA]</scope>
    <source>
        <strain>ATCC 35110 / GB-78</strain>
    </source>
</reference>
<organism>
    <name type="scientific">Chloroherpeton thalassium (strain ATCC 35110 / GB-78)</name>
    <dbReference type="NCBI Taxonomy" id="517418"/>
    <lineage>
        <taxon>Bacteria</taxon>
        <taxon>Pseudomonadati</taxon>
        <taxon>Chlorobiota</taxon>
        <taxon>Chlorobiia</taxon>
        <taxon>Chlorobiales</taxon>
        <taxon>Chloroherpetonaceae</taxon>
        <taxon>Chloroherpeton</taxon>
    </lineage>
</organism>
<comment type="function">
    <text evidence="1">Regulates arginine biosynthesis genes.</text>
</comment>
<comment type="pathway">
    <text>Amino-acid biosynthesis; L-arginine biosynthesis [regulation].</text>
</comment>
<comment type="subcellular location">
    <subcellularLocation>
        <location evidence="1">Cytoplasm</location>
    </subcellularLocation>
</comment>
<comment type="similarity">
    <text evidence="1">Belongs to the ArgR family.</text>
</comment>
<proteinExistence type="inferred from homology"/>
<feature type="chain" id="PRO_1000097862" description="Arginine repressor">
    <location>
        <begin position="1"/>
        <end position="148"/>
    </location>
</feature>
<accession>B3QWH2</accession>
<name>ARGR_CHLT3</name>